<reference key="1">
    <citation type="journal article" date="1996" name="Nucleic Acids Res.">
        <title>Complete sequence analysis of the genome of the bacterium Mycoplasma pneumoniae.</title>
        <authorList>
            <person name="Himmelreich R."/>
            <person name="Hilbert H."/>
            <person name="Plagens H."/>
            <person name="Pirkl E."/>
            <person name="Li B.-C."/>
            <person name="Herrmann R."/>
        </authorList>
    </citation>
    <scope>NUCLEOTIDE SEQUENCE [LARGE SCALE GENOMIC DNA]</scope>
    <source>
        <strain>ATCC 29342 / M129 / Subtype 1</strain>
    </source>
</reference>
<feature type="chain" id="PRO_0000210634" description="Uncharacterized protein MPN_037">
    <location>
        <begin position="1"/>
        <end position="147"/>
    </location>
</feature>
<name>Y037_MYCPN</name>
<gene>
    <name type="ordered locus">MPN_037</name>
    <name type="ORF">B01_orf147</name>
    <name type="ORF">MP117</name>
</gene>
<evidence type="ECO:0000305" key="1"/>
<protein>
    <recommendedName>
        <fullName>Uncharacterized protein MPN_037</fullName>
    </recommendedName>
</protein>
<dbReference type="EMBL" id="U00089">
    <property type="protein sequence ID" value="AAB95765.1"/>
    <property type="molecule type" value="Genomic_DNA"/>
</dbReference>
<dbReference type="PIR" id="S73443">
    <property type="entry name" value="S73443"/>
</dbReference>
<dbReference type="RefSeq" id="NP_109725.1">
    <property type="nucleotide sequence ID" value="NC_000912.1"/>
</dbReference>
<dbReference type="STRING" id="272634.MPN_037"/>
<dbReference type="EnsemblBacteria" id="AAB95765">
    <property type="protein sequence ID" value="AAB95765"/>
    <property type="gene ID" value="MPN_037"/>
</dbReference>
<dbReference type="KEGG" id="mpn:MPN_037"/>
<dbReference type="HOGENOM" id="CLU_1766006_0_0_14"/>
<dbReference type="BioCyc" id="MPNE272634:G1GJ3-53-MONOMER"/>
<dbReference type="Proteomes" id="UP000000808">
    <property type="component" value="Chromosome"/>
</dbReference>
<comment type="similarity">
    <text evidence="1">To M.pneumoniae MPN_465.</text>
</comment>
<proteinExistence type="predicted"/>
<keyword id="KW-1185">Reference proteome</keyword>
<organism>
    <name type="scientific">Mycoplasma pneumoniae (strain ATCC 29342 / M129 / Subtype 1)</name>
    <name type="common">Mycoplasmoides pneumoniae</name>
    <dbReference type="NCBI Taxonomy" id="272634"/>
    <lineage>
        <taxon>Bacteria</taxon>
        <taxon>Bacillati</taxon>
        <taxon>Mycoplasmatota</taxon>
        <taxon>Mycoplasmoidales</taxon>
        <taxon>Mycoplasmoidaceae</taxon>
        <taxon>Mycoplasmoides</taxon>
    </lineage>
</organism>
<accession>P75077</accession>
<sequence>MPSSAFKINLSVSPWFFCSTWSSLICWPWTITTSVSRSTLSSTTWILWTWLFNSVSIFVSRWSFDFLYSLNSLRVTYSVFTGITGLLSLNCLLKLPENSTLLLSLSIIYQPEKVPFWSFSPCHEILFRYKTEFSLSLSHTSFLFSEI</sequence>